<dbReference type="PDB" id="1SEI">
    <property type="method" value="X-ray"/>
    <property type="resolution" value="1.90 A"/>
    <property type="chains" value="A/B=2-131"/>
</dbReference>
<dbReference type="PDBsum" id="1SEI"/>
<dbReference type="SMR" id="P56209"/>
<dbReference type="EvolutionaryTrace" id="P56209"/>
<dbReference type="GO" id="GO:1990904">
    <property type="term" value="C:ribonucleoprotein complex"/>
    <property type="evidence" value="ECO:0007669"/>
    <property type="project" value="UniProtKB-KW"/>
</dbReference>
<dbReference type="GO" id="GO:0005840">
    <property type="term" value="C:ribosome"/>
    <property type="evidence" value="ECO:0007669"/>
    <property type="project" value="UniProtKB-KW"/>
</dbReference>
<dbReference type="GO" id="GO:0019843">
    <property type="term" value="F:rRNA binding"/>
    <property type="evidence" value="ECO:0007669"/>
    <property type="project" value="UniProtKB-UniRule"/>
</dbReference>
<dbReference type="GO" id="GO:0003735">
    <property type="term" value="F:structural constituent of ribosome"/>
    <property type="evidence" value="ECO:0007669"/>
    <property type="project" value="InterPro"/>
</dbReference>
<dbReference type="GO" id="GO:0006412">
    <property type="term" value="P:translation"/>
    <property type="evidence" value="ECO:0007669"/>
    <property type="project" value="UniProtKB-UniRule"/>
</dbReference>
<dbReference type="FunFam" id="3.30.1370.30:FF:000002">
    <property type="entry name" value="30S ribosomal protein S8"/>
    <property type="match status" value="1"/>
</dbReference>
<dbReference type="FunFam" id="3.30.1490.10:FF:000001">
    <property type="entry name" value="30S ribosomal protein S8"/>
    <property type="match status" value="1"/>
</dbReference>
<dbReference type="Gene3D" id="3.30.1370.30">
    <property type="match status" value="1"/>
</dbReference>
<dbReference type="Gene3D" id="3.30.1490.10">
    <property type="match status" value="1"/>
</dbReference>
<dbReference type="HAMAP" id="MF_01302_B">
    <property type="entry name" value="Ribosomal_uS8_B"/>
    <property type="match status" value="1"/>
</dbReference>
<dbReference type="InterPro" id="IPR000630">
    <property type="entry name" value="Ribosomal_uS8"/>
</dbReference>
<dbReference type="InterPro" id="IPR047863">
    <property type="entry name" value="Ribosomal_uS8_CS"/>
</dbReference>
<dbReference type="InterPro" id="IPR035987">
    <property type="entry name" value="Ribosomal_uS8_sf"/>
</dbReference>
<dbReference type="NCBIfam" id="NF001109">
    <property type="entry name" value="PRK00136.1"/>
    <property type="match status" value="1"/>
</dbReference>
<dbReference type="PANTHER" id="PTHR11758">
    <property type="entry name" value="40S RIBOSOMAL PROTEIN S15A"/>
    <property type="match status" value="1"/>
</dbReference>
<dbReference type="Pfam" id="PF00410">
    <property type="entry name" value="Ribosomal_S8"/>
    <property type="match status" value="1"/>
</dbReference>
<dbReference type="SUPFAM" id="SSF56047">
    <property type="entry name" value="Ribosomal protein S8"/>
    <property type="match status" value="1"/>
</dbReference>
<dbReference type="PROSITE" id="PS00053">
    <property type="entry name" value="RIBOSOMAL_S8"/>
    <property type="match status" value="1"/>
</dbReference>
<name>RS8_GEOSE</name>
<feature type="initiator methionine" description="Removed" evidence="2 3">
    <location>
        <position position="1"/>
    </location>
</feature>
<feature type="chain" id="PRO_0000126366" description="Small ribosomal subunit protein uS8">
    <location>
        <begin position="2"/>
        <end position="131"/>
    </location>
</feature>
<feature type="sequence conflict" description="In Ref. 2; AA sequence." evidence="4" ref="2">
    <original>A</original>
    <variation>R</variation>
    <location>
        <position position="13"/>
    </location>
</feature>
<feature type="helix" evidence="5">
    <location>
        <begin position="5"/>
        <end position="19"/>
    </location>
</feature>
<feature type="strand" evidence="5">
    <location>
        <begin position="23"/>
        <end position="28"/>
    </location>
</feature>
<feature type="helix" evidence="5">
    <location>
        <begin position="31"/>
        <end position="42"/>
    </location>
</feature>
<feature type="strand" evidence="5">
    <location>
        <begin position="45"/>
        <end position="56"/>
    </location>
</feature>
<feature type="strand" evidence="5">
    <location>
        <begin position="58"/>
        <end position="64"/>
    </location>
</feature>
<feature type="strand" evidence="5">
    <location>
        <begin position="66"/>
        <end position="72"/>
    </location>
</feature>
<feature type="strand" evidence="5">
    <location>
        <begin position="76"/>
        <end position="78"/>
    </location>
</feature>
<feature type="helix" evidence="5">
    <location>
        <begin position="90"/>
        <end position="92"/>
    </location>
</feature>
<feature type="strand" evidence="5">
    <location>
        <begin position="102"/>
        <end position="107"/>
    </location>
</feature>
<feature type="strand" evidence="5">
    <location>
        <begin position="110"/>
        <end position="113"/>
    </location>
</feature>
<feature type="helix" evidence="5">
    <location>
        <begin position="114"/>
        <end position="120"/>
    </location>
</feature>
<feature type="strand" evidence="5">
    <location>
        <begin position="124"/>
        <end position="130"/>
    </location>
</feature>
<comment type="function">
    <text evidence="1">One of the primary rRNA binding proteins, it binds directly to 16S rRNA central domain where it helps coordinate assembly of the platform of the 30S subunit.</text>
</comment>
<comment type="subunit">
    <text evidence="1">Part of the 30S ribosomal subunit. Contacts proteins S5 and S12.</text>
</comment>
<comment type="similarity">
    <text evidence="1">Belongs to the universal ribosomal protein uS8 family.</text>
</comment>
<sequence>MVMTDPIADMLTAIRNANMVRHEKLEVPASKIKREIAEILKREGFIRDYEYIEDNKQGILRIFLKYGPNERVITGLKRISKPGLRVYVKAHEVPRVLNGLGIAILSTSQGVLTDKEARQKGTGGEIIAYVI</sequence>
<organism>
    <name type="scientific">Geobacillus stearothermophilus</name>
    <name type="common">Bacillus stearothermophilus</name>
    <dbReference type="NCBI Taxonomy" id="1422"/>
    <lineage>
        <taxon>Bacteria</taxon>
        <taxon>Bacillati</taxon>
        <taxon>Bacillota</taxon>
        <taxon>Bacilli</taxon>
        <taxon>Bacillales</taxon>
        <taxon>Anoxybacillaceae</taxon>
        <taxon>Geobacillus</taxon>
    </lineage>
</organism>
<reference key="1">
    <citation type="journal article" date="1991" name="Biochimie">
        <title>Primary structures of ribosomal proteins from the archaebacterium Halobacterium marismortui and the eubacterium Bacillus stearothermophilus.</title>
        <authorList>
            <person name="Arndt E."/>
            <person name="Scholzen T."/>
            <person name="Kromer W."/>
            <person name="Hatakeyama T."/>
            <person name="Kimura M."/>
        </authorList>
    </citation>
    <scope>PROTEIN SEQUENCE OF 2-131</scope>
</reference>
<reference key="2">
    <citation type="journal article" date="1974" name="FEBS Lett.">
        <title>Procaryotic ribosomal proteins: N-terminal sequence homologies and structural correspondence of 30 S ribosomal proteins from Escherichia coli and Bacillus stearothermophilus.</title>
        <authorList>
            <person name="Yaguchi M."/>
            <person name="Matheson A.T."/>
            <person name="Visentin L.P."/>
        </authorList>
    </citation>
    <scope>PROTEIN SEQUENCE OF 2-16</scope>
    <source>
        <strain>DSM 13240 / CIP 106956 / 10</strain>
    </source>
</reference>
<reference key="3">
    <citation type="journal article" date="1996" name="Structure">
        <title>Structural evidence for specific S8-RNA and S8-protein interactions within the 30S ribosomal subunit: ribosomal protein S8 from Bacillus stearothermophilus at 1.9-A resolution.</title>
        <authorList>
            <person name="Davies C."/>
            <person name="Ramakrishnan V."/>
            <person name="White S.W."/>
        </authorList>
    </citation>
    <scope>X-RAY CRYSTALLOGRAPHY (1.9 ANGSTROMS)</scope>
</reference>
<keyword id="KW-0002">3D-structure</keyword>
<keyword id="KW-0903">Direct protein sequencing</keyword>
<keyword id="KW-0687">Ribonucleoprotein</keyword>
<keyword id="KW-0689">Ribosomal protein</keyword>
<keyword id="KW-0694">RNA-binding</keyword>
<keyword id="KW-0699">rRNA-binding</keyword>
<proteinExistence type="evidence at protein level"/>
<evidence type="ECO:0000255" key="1">
    <source>
        <dbReference type="HAMAP-Rule" id="MF_01302"/>
    </source>
</evidence>
<evidence type="ECO:0000269" key="2">
    <source>
    </source>
</evidence>
<evidence type="ECO:0000269" key="3">
    <source>
    </source>
</evidence>
<evidence type="ECO:0000305" key="4"/>
<evidence type="ECO:0007829" key="5">
    <source>
        <dbReference type="PDB" id="1SEI"/>
    </source>
</evidence>
<protein>
    <recommendedName>
        <fullName evidence="1">Small ribosomal subunit protein uS8</fullName>
    </recommendedName>
    <alternativeName>
        <fullName evidence="4">30S ribosomal protein S8</fullName>
        <shortName>BS8</shortName>
    </alternativeName>
</protein>
<accession>P56209</accession>
<gene>
    <name evidence="1" type="primary">rpsH</name>
</gene>